<evidence type="ECO:0000255" key="1">
    <source>
        <dbReference type="HAMAP-Rule" id="MF_00358"/>
    </source>
</evidence>
<evidence type="ECO:0000256" key="2">
    <source>
        <dbReference type="SAM" id="MobiDB-lite"/>
    </source>
</evidence>
<evidence type="ECO:0000305" key="3"/>
<keyword id="KW-0687">Ribonucleoprotein</keyword>
<keyword id="KW-0689">Ribosomal protein</keyword>
<reference key="1">
    <citation type="journal article" date="2000" name="Cell Stress Chaperones">
        <title>Cloning, sequencing, and transcriptional analysis of the dnaK heat shock operon of Listeria monocytogenes.</title>
        <authorList>
            <person name="Hanawa T."/>
            <person name="Kai M."/>
            <person name="Kamiya S."/>
            <person name="Yamamoto T."/>
        </authorList>
    </citation>
    <scope>NUCLEOTIDE SEQUENCE [GENOMIC DNA]</scope>
    <source>
        <strain>10403S</strain>
    </source>
</reference>
<reference key="2">
    <citation type="submission" date="2010-04" db="EMBL/GenBank/DDBJ databases">
        <title>The genome sequence of Listeria monocytogenes strain 10403S.</title>
        <authorList>
            <consortium name="The Broad Institute Genome Sequencing Platform"/>
            <consortium name="The Broad Institute Genome Sequencing Center for Infectious Disease"/>
            <person name="Borowsky M."/>
            <person name="Borodovsky M."/>
            <person name="Young S.K."/>
            <person name="Zeng Q."/>
            <person name="Koehrsen M."/>
            <person name="Fitzgerald M."/>
            <person name="Wiedmann M."/>
            <person name="Swaminathan B."/>
            <person name="Lauer P."/>
            <person name="Portnoy D."/>
            <person name="Cossart P."/>
            <person name="Buchrieser C."/>
            <person name="Higgins D."/>
            <person name="Abouelleil A."/>
            <person name="Alvarado L."/>
            <person name="Arachchi H.M."/>
            <person name="Berlin A."/>
            <person name="Borenstein D."/>
            <person name="Brown A."/>
            <person name="Chapman S.B."/>
            <person name="Chen Z."/>
            <person name="Dunbar C.D."/>
            <person name="Engels R."/>
            <person name="Freedman E."/>
            <person name="Gearin G."/>
            <person name="Gellesch M."/>
            <person name="Goldberg J."/>
            <person name="Griggs A."/>
            <person name="Gujja S."/>
            <person name="Heilman E."/>
            <person name="Heiman D."/>
            <person name="Howarth C."/>
            <person name="Jen D."/>
            <person name="Larson L."/>
            <person name="Lui A."/>
            <person name="MacDonald J."/>
            <person name="Mehta T."/>
            <person name="Montmayeur A."/>
            <person name="Neiman D."/>
            <person name="Park D."/>
            <person name="Pearson M."/>
            <person name="Priest M."/>
            <person name="Richards J."/>
            <person name="Roberts A."/>
            <person name="Saif S."/>
            <person name="Shea T."/>
            <person name="Shenoy N."/>
            <person name="Sisk P."/>
            <person name="Stolte C."/>
            <person name="Sykes S."/>
            <person name="Walk T."/>
            <person name="White J."/>
            <person name="Yandava C."/>
            <person name="Haas B."/>
            <person name="Nusbaum C."/>
            <person name="Birren B."/>
        </authorList>
    </citation>
    <scope>NUCLEOTIDE SEQUENCE [LARGE SCALE GENOMIC DNA]</scope>
    <source>
        <strain>10403S</strain>
    </source>
</reference>
<gene>
    <name evidence="1" type="primary">rpsU</name>
    <name type="ordered locus">LMRG_00922</name>
</gene>
<accession>G2K042</accession>
<accession>P0A4B9</accession>
<accession>Q9S5A0</accession>
<dbReference type="EMBL" id="AB023064">
    <property type="protein sequence ID" value="BAA82793.1"/>
    <property type="molecule type" value="Genomic_DNA"/>
</dbReference>
<dbReference type="EMBL" id="CP002002">
    <property type="protein sequence ID" value="AEO06454.1"/>
    <property type="status" value="ALT_INIT"/>
    <property type="molecule type" value="Genomic_DNA"/>
</dbReference>
<dbReference type="PIR" id="T43742">
    <property type="entry name" value="T43742"/>
</dbReference>
<dbReference type="RefSeq" id="WP_003719762.1">
    <property type="nucleotide sequence ID" value="NC_017544.1"/>
</dbReference>
<dbReference type="SMR" id="G2K042"/>
<dbReference type="GeneID" id="93239346"/>
<dbReference type="KEGG" id="lmt:LMRG_00922"/>
<dbReference type="HOGENOM" id="CLU_159258_3_2_9"/>
<dbReference type="Proteomes" id="UP000001288">
    <property type="component" value="Chromosome"/>
</dbReference>
<dbReference type="GO" id="GO:1990904">
    <property type="term" value="C:ribonucleoprotein complex"/>
    <property type="evidence" value="ECO:0007669"/>
    <property type="project" value="UniProtKB-KW"/>
</dbReference>
<dbReference type="GO" id="GO:0005840">
    <property type="term" value="C:ribosome"/>
    <property type="evidence" value="ECO:0007669"/>
    <property type="project" value="UniProtKB-KW"/>
</dbReference>
<dbReference type="GO" id="GO:0003735">
    <property type="term" value="F:structural constituent of ribosome"/>
    <property type="evidence" value="ECO:0007669"/>
    <property type="project" value="InterPro"/>
</dbReference>
<dbReference type="GO" id="GO:0006412">
    <property type="term" value="P:translation"/>
    <property type="evidence" value="ECO:0007669"/>
    <property type="project" value="UniProtKB-UniRule"/>
</dbReference>
<dbReference type="Gene3D" id="1.20.5.1150">
    <property type="entry name" value="Ribosomal protein S8"/>
    <property type="match status" value="1"/>
</dbReference>
<dbReference type="HAMAP" id="MF_00358">
    <property type="entry name" value="Ribosomal_bS21"/>
    <property type="match status" value="1"/>
</dbReference>
<dbReference type="InterPro" id="IPR001911">
    <property type="entry name" value="Ribosomal_bS21"/>
</dbReference>
<dbReference type="InterPro" id="IPR018278">
    <property type="entry name" value="Ribosomal_bS21_CS"/>
</dbReference>
<dbReference type="InterPro" id="IPR038380">
    <property type="entry name" value="Ribosomal_bS21_sf"/>
</dbReference>
<dbReference type="NCBIfam" id="TIGR00030">
    <property type="entry name" value="S21p"/>
    <property type="match status" value="1"/>
</dbReference>
<dbReference type="PANTHER" id="PTHR21109">
    <property type="entry name" value="MITOCHONDRIAL 28S RIBOSOMAL PROTEIN S21"/>
    <property type="match status" value="1"/>
</dbReference>
<dbReference type="PANTHER" id="PTHR21109:SF22">
    <property type="entry name" value="SMALL RIBOSOMAL SUBUNIT PROTEIN BS21"/>
    <property type="match status" value="1"/>
</dbReference>
<dbReference type="Pfam" id="PF01165">
    <property type="entry name" value="Ribosomal_S21"/>
    <property type="match status" value="1"/>
</dbReference>
<dbReference type="PRINTS" id="PR00976">
    <property type="entry name" value="RIBOSOMALS21"/>
</dbReference>
<dbReference type="PROSITE" id="PS01181">
    <property type="entry name" value="RIBOSOMAL_S21"/>
    <property type="match status" value="1"/>
</dbReference>
<protein>
    <recommendedName>
        <fullName evidence="1">Small ribosomal subunit protein bS21</fullName>
    </recommendedName>
    <alternativeName>
        <fullName evidence="3">30S ribosomal protein S21</fullName>
    </alternativeName>
</protein>
<feature type="chain" id="PRO_0000419034" description="Small ribosomal subunit protein bS21">
    <location>
        <begin position="1"/>
        <end position="57"/>
    </location>
</feature>
<feature type="region of interest" description="Disordered" evidence="2">
    <location>
        <begin position="24"/>
        <end position="57"/>
    </location>
</feature>
<feature type="compositionally biased region" description="Basic and acidic residues" evidence="2">
    <location>
        <begin position="31"/>
        <end position="42"/>
    </location>
</feature>
<feature type="compositionally biased region" description="Basic residues" evidence="2">
    <location>
        <begin position="43"/>
        <end position="57"/>
    </location>
</feature>
<sequence>MSKTVVRKNESLEDALRRFKRTVSKSGTLQESRKREFYEKPSVKRKKKSEAARKRKF</sequence>
<comment type="similarity">
    <text evidence="1">Belongs to the bacterial ribosomal protein bS21 family.</text>
</comment>
<comment type="sequence caution" evidence="3">
    <conflict type="erroneous initiation">
        <sequence resource="EMBL-CDS" id="AEO06454"/>
    </conflict>
    <text>Extended N-terminus.</text>
</comment>
<organism>
    <name type="scientific">Listeria monocytogenes serotype 1/2a (strain 10403S)</name>
    <dbReference type="NCBI Taxonomy" id="393133"/>
    <lineage>
        <taxon>Bacteria</taxon>
        <taxon>Bacillati</taxon>
        <taxon>Bacillota</taxon>
        <taxon>Bacilli</taxon>
        <taxon>Bacillales</taxon>
        <taxon>Listeriaceae</taxon>
        <taxon>Listeria</taxon>
    </lineage>
</organism>
<proteinExistence type="inferred from homology"/>
<name>RS21_LISM4</name>